<comment type="function">
    <text evidence="1">Fluoride-specific ion channel. Important for reducing fluoride concentration in the cell, thus reducing its toxicity.</text>
</comment>
<comment type="catalytic activity">
    <reaction evidence="1">
        <text>fluoride(in) = fluoride(out)</text>
        <dbReference type="Rhea" id="RHEA:76159"/>
        <dbReference type="ChEBI" id="CHEBI:17051"/>
    </reaction>
    <physiologicalReaction direction="left-to-right" evidence="1">
        <dbReference type="Rhea" id="RHEA:76160"/>
    </physiologicalReaction>
</comment>
<comment type="activity regulation">
    <text evidence="1">Na(+) is not transported, but it plays an essential structural role and its presence is essential for fluoride channel function.</text>
</comment>
<comment type="subcellular location">
    <subcellularLocation>
        <location evidence="1">Cell inner membrane</location>
        <topology evidence="1">Multi-pass membrane protein</topology>
    </subcellularLocation>
</comment>
<comment type="similarity">
    <text evidence="1">Belongs to the fluoride channel Fluc/FEX (TC 1.A.43) family.</text>
</comment>
<accession>Q46IH7</accession>
<sequence length="124" mass="13899">MSDILFVSIGAILGANIRFQIHHKLGNLNLDKGFLILIINTFASFGLGLFLSLVEQFRAFTYSYQLILFFSIGFFGSLSTFSSFVYDLFDLCLQLELFRALKLFIISVSIGIIAFAFGLFLGTQ</sequence>
<reference key="1">
    <citation type="journal article" date="2007" name="PLoS Genet.">
        <title>Patterns and implications of gene gain and loss in the evolution of Prochlorococcus.</title>
        <authorList>
            <person name="Kettler G.C."/>
            <person name="Martiny A.C."/>
            <person name="Huang K."/>
            <person name="Zucker J."/>
            <person name="Coleman M.L."/>
            <person name="Rodrigue S."/>
            <person name="Chen F."/>
            <person name="Lapidus A."/>
            <person name="Ferriera S."/>
            <person name="Johnson J."/>
            <person name="Steglich C."/>
            <person name="Church G.M."/>
            <person name="Richardson P."/>
            <person name="Chisholm S.W."/>
        </authorList>
    </citation>
    <scope>NUCLEOTIDE SEQUENCE [LARGE SCALE GENOMIC DNA]</scope>
    <source>
        <strain>NATL2A</strain>
    </source>
</reference>
<evidence type="ECO:0000255" key="1">
    <source>
        <dbReference type="HAMAP-Rule" id="MF_00454"/>
    </source>
</evidence>
<keyword id="KW-0997">Cell inner membrane</keyword>
<keyword id="KW-1003">Cell membrane</keyword>
<keyword id="KW-0407">Ion channel</keyword>
<keyword id="KW-0406">Ion transport</keyword>
<keyword id="KW-0472">Membrane</keyword>
<keyword id="KW-0479">Metal-binding</keyword>
<keyword id="KW-1185">Reference proteome</keyword>
<keyword id="KW-0915">Sodium</keyword>
<keyword id="KW-0812">Transmembrane</keyword>
<keyword id="KW-1133">Transmembrane helix</keyword>
<keyword id="KW-0813">Transport</keyword>
<dbReference type="EMBL" id="CP000095">
    <property type="protein sequence ID" value="AAZ58701.1"/>
    <property type="molecule type" value="Genomic_DNA"/>
</dbReference>
<dbReference type="RefSeq" id="WP_011295555.1">
    <property type="nucleotide sequence ID" value="NC_007335.2"/>
</dbReference>
<dbReference type="SMR" id="Q46IH7"/>
<dbReference type="STRING" id="59920.PMN2A_1211"/>
<dbReference type="KEGG" id="pmn:PMN2A_1211"/>
<dbReference type="HOGENOM" id="CLU_114342_2_3_3"/>
<dbReference type="OrthoDB" id="560684at2"/>
<dbReference type="Proteomes" id="UP000002535">
    <property type="component" value="Chromosome"/>
</dbReference>
<dbReference type="GO" id="GO:0005886">
    <property type="term" value="C:plasma membrane"/>
    <property type="evidence" value="ECO:0007669"/>
    <property type="project" value="UniProtKB-SubCell"/>
</dbReference>
<dbReference type="GO" id="GO:0062054">
    <property type="term" value="F:fluoride channel activity"/>
    <property type="evidence" value="ECO:0007669"/>
    <property type="project" value="UniProtKB-UniRule"/>
</dbReference>
<dbReference type="GO" id="GO:0046872">
    <property type="term" value="F:metal ion binding"/>
    <property type="evidence" value="ECO:0007669"/>
    <property type="project" value="UniProtKB-KW"/>
</dbReference>
<dbReference type="GO" id="GO:0140114">
    <property type="term" value="P:cellular detoxification of fluoride"/>
    <property type="evidence" value="ECO:0007669"/>
    <property type="project" value="UniProtKB-UniRule"/>
</dbReference>
<dbReference type="HAMAP" id="MF_00454">
    <property type="entry name" value="FluC"/>
    <property type="match status" value="1"/>
</dbReference>
<dbReference type="InterPro" id="IPR003691">
    <property type="entry name" value="FluC"/>
</dbReference>
<dbReference type="Pfam" id="PF02537">
    <property type="entry name" value="CRCB"/>
    <property type="match status" value="1"/>
</dbReference>
<proteinExistence type="inferred from homology"/>
<protein>
    <recommendedName>
        <fullName evidence="1">Fluoride-specific ion channel FluC 2</fullName>
    </recommendedName>
</protein>
<feature type="chain" id="PRO_0000252912" description="Fluoride-specific ion channel FluC 2">
    <location>
        <begin position="1"/>
        <end position="124"/>
    </location>
</feature>
<feature type="transmembrane region" description="Helical" evidence="1">
    <location>
        <begin position="1"/>
        <end position="21"/>
    </location>
</feature>
<feature type="transmembrane region" description="Helical" evidence="1">
    <location>
        <begin position="34"/>
        <end position="54"/>
    </location>
</feature>
<feature type="transmembrane region" description="Helical" evidence="1">
    <location>
        <begin position="66"/>
        <end position="86"/>
    </location>
</feature>
<feature type="transmembrane region" description="Helical" evidence="1">
    <location>
        <begin position="103"/>
        <end position="123"/>
    </location>
</feature>
<feature type="binding site" evidence="1">
    <location>
        <position position="76"/>
    </location>
    <ligand>
        <name>Na(+)</name>
        <dbReference type="ChEBI" id="CHEBI:29101"/>
        <note>structural</note>
    </ligand>
</feature>
<feature type="binding site" evidence="1">
    <location>
        <position position="79"/>
    </location>
    <ligand>
        <name>Na(+)</name>
        <dbReference type="ChEBI" id="CHEBI:29101"/>
        <note>structural</note>
    </ligand>
</feature>
<gene>
    <name evidence="1" type="primary">fluC2</name>
    <name evidence="1" type="synonym">crcB2</name>
    <name type="ordered locus">PMN2A_1211</name>
</gene>
<organism>
    <name type="scientific">Prochlorococcus marinus (strain NATL2A)</name>
    <dbReference type="NCBI Taxonomy" id="59920"/>
    <lineage>
        <taxon>Bacteria</taxon>
        <taxon>Bacillati</taxon>
        <taxon>Cyanobacteriota</taxon>
        <taxon>Cyanophyceae</taxon>
        <taxon>Synechococcales</taxon>
        <taxon>Prochlorococcaceae</taxon>
        <taxon>Prochlorococcus</taxon>
    </lineage>
</organism>
<name>FLUC2_PROMT</name>